<proteinExistence type="inferred from homology"/>
<comment type="function">
    <text evidence="1">Responsible for the release of ribosomes from messenger RNA at the termination of protein biosynthesis. May increase the efficiency of translation by recycling ribosomes from one round of translation to another.</text>
</comment>
<comment type="subcellular location">
    <subcellularLocation>
        <location evidence="1">Cytoplasm</location>
    </subcellularLocation>
</comment>
<comment type="similarity">
    <text evidence="1">Belongs to the RRF family.</text>
</comment>
<gene>
    <name evidence="1" type="primary">frr</name>
    <name type="ordered locus">DNO_0720</name>
</gene>
<evidence type="ECO:0000255" key="1">
    <source>
        <dbReference type="HAMAP-Rule" id="MF_00040"/>
    </source>
</evidence>
<keyword id="KW-0963">Cytoplasm</keyword>
<keyword id="KW-0648">Protein biosynthesis</keyword>
<keyword id="KW-1185">Reference proteome</keyword>
<feature type="chain" id="PRO_1000003156" description="Ribosome-recycling factor">
    <location>
        <begin position="1"/>
        <end position="185"/>
    </location>
</feature>
<accession>A5EV26</accession>
<dbReference type="EMBL" id="CP000513">
    <property type="protein sequence ID" value="ABQ13091.1"/>
    <property type="molecule type" value="Genomic_DNA"/>
</dbReference>
<dbReference type="RefSeq" id="WP_012031052.1">
    <property type="nucleotide sequence ID" value="NC_009446.1"/>
</dbReference>
<dbReference type="SMR" id="A5EV26"/>
<dbReference type="STRING" id="246195.DNO_0720"/>
<dbReference type="KEGG" id="dno:DNO_0720"/>
<dbReference type="eggNOG" id="COG0233">
    <property type="taxonomic scope" value="Bacteria"/>
</dbReference>
<dbReference type="HOGENOM" id="CLU_073981_2_0_6"/>
<dbReference type="OrthoDB" id="9804006at2"/>
<dbReference type="Proteomes" id="UP000000248">
    <property type="component" value="Chromosome"/>
</dbReference>
<dbReference type="GO" id="GO:0005829">
    <property type="term" value="C:cytosol"/>
    <property type="evidence" value="ECO:0007669"/>
    <property type="project" value="GOC"/>
</dbReference>
<dbReference type="GO" id="GO:0043023">
    <property type="term" value="F:ribosomal large subunit binding"/>
    <property type="evidence" value="ECO:0007669"/>
    <property type="project" value="TreeGrafter"/>
</dbReference>
<dbReference type="GO" id="GO:0002184">
    <property type="term" value="P:cytoplasmic translational termination"/>
    <property type="evidence" value="ECO:0007669"/>
    <property type="project" value="TreeGrafter"/>
</dbReference>
<dbReference type="CDD" id="cd00520">
    <property type="entry name" value="RRF"/>
    <property type="match status" value="1"/>
</dbReference>
<dbReference type="FunFam" id="1.10.132.20:FF:000001">
    <property type="entry name" value="Ribosome-recycling factor"/>
    <property type="match status" value="1"/>
</dbReference>
<dbReference type="FunFam" id="3.30.1360.40:FF:000001">
    <property type="entry name" value="Ribosome-recycling factor"/>
    <property type="match status" value="1"/>
</dbReference>
<dbReference type="Gene3D" id="3.30.1360.40">
    <property type="match status" value="1"/>
</dbReference>
<dbReference type="Gene3D" id="1.10.132.20">
    <property type="entry name" value="Ribosome-recycling factor"/>
    <property type="match status" value="1"/>
</dbReference>
<dbReference type="HAMAP" id="MF_00040">
    <property type="entry name" value="RRF"/>
    <property type="match status" value="1"/>
</dbReference>
<dbReference type="InterPro" id="IPR002661">
    <property type="entry name" value="Ribosome_recyc_fac"/>
</dbReference>
<dbReference type="InterPro" id="IPR023584">
    <property type="entry name" value="Ribosome_recyc_fac_dom"/>
</dbReference>
<dbReference type="InterPro" id="IPR036191">
    <property type="entry name" value="RRF_sf"/>
</dbReference>
<dbReference type="NCBIfam" id="TIGR00496">
    <property type="entry name" value="frr"/>
    <property type="match status" value="1"/>
</dbReference>
<dbReference type="PANTHER" id="PTHR20982:SF3">
    <property type="entry name" value="MITOCHONDRIAL RIBOSOME RECYCLING FACTOR PSEUDO 1"/>
    <property type="match status" value="1"/>
</dbReference>
<dbReference type="PANTHER" id="PTHR20982">
    <property type="entry name" value="RIBOSOME RECYCLING FACTOR"/>
    <property type="match status" value="1"/>
</dbReference>
<dbReference type="Pfam" id="PF01765">
    <property type="entry name" value="RRF"/>
    <property type="match status" value="1"/>
</dbReference>
<dbReference type="SUPFAM" id="SSF55194">
    <property type="entry name" value="Ribosome recycling factor, RRF"/>
    <property type="match status" value="1"/>
</dbReference>
<sequence>MTQEILKDTQSRMKKSVQTLEADLTKIRTGRANVSLLDHIEVEYYGAMVPLSQAANVNVTDHRTLSIQIWERDMVAKIEKAIINSDLGLTPNTAGQNIHINLPPLTEERRKEMVKVVKNEGEQAKIAVRNIRRDANQSLSKLLTQKEISEDEQRKSEEEIQKITDHFVAEIDKVLMAKEKELMEL</sequence>
<protein>
    <recommendedName>
        <fullName evidence="1">Ribosome-recycling factor</fullName>
        <shortName evidence="1">RRF</shortName>
    </recommendedName>
    <alternativeName>
        <fullName evidence="1">Ribosome-releasing factor</fullName>
    </alternativeName>
</protein>
<organism>
    <name type="scientific">Dichelobacter nodosus (strain VCS1703A)</name>
    <dbReference type="NCBI Taxonomy" id="246195"/>
    <lineage>
        <taxon>Bacteria</taxon>
        <taxon>Pseudomonadati</taxon>
        <taxon>Pseudomonadota</taxon>
        <taxon>Gammaproteobacteria</taxon>
        <taxon>Cardiobacteriales</taxon>
        <taxon>Cardiobacteriaceae</taxon>
        <taxon>Dichelobacter</taxon>
    </lineage>
</organism>
<reference key="1">
    <citation type="journal article" date="2007" name="Nat. Biotechnol.">
        <title>Genome sequence and identification of candidate vaccine antigens from the animal pathogen Dichelobacter nodosus.</title>
        <authorList>
            <person name="Myers G.S.A."/>
            <person name="Parker D."/>
            <person name="Al-Hasani K."/>
            <person name="Kennan R.M."/>
            <person name="Seemann T."/>
            <person name="Ren Q."/>
            <person name="Badger J.H."/>
            <person name="Selengut J.D."/>
            <person name="Deboy R.T."/>
            <person name="Tettelin H."/>
            <person name="Boyce J.D."/>
            <person name="McCarl V.P."/>
            <person name="Han X."/>
            <person name="Nelson W.C."/>
            <person name="Madupu R."/>
            <person name="Mohamoud Y."/>
            <person name="Holley T."/>
            <person name="Fedorova N."/>
            <person name="Khouri H."/>
            <person name="Bottomley S.P."/>
            <person name="Whittington R.J."/>
            <person name="Adler B."/>
            <person name="Songer J.G."/>
            <person name="Rood J.I."/>
            <person name="Paulsen I.T."/>
        </authorList>
    </citation>
    <scope>NUCLEOTIDE SEQUENCE [LARGE SCALE GENOMIC DNA]</scope>
    <source>
        <strain>VCS1703A</strain>
    </source>
</reference>
<name>RRF_DICNV</name>